<proteinExistence type="inferred from homology"/>
<sequence length="163" mass="18087">MSNINLATLDISEHPNLPSSSAVLFEAKAKKKLSFEAIASAIGRNEVATAAIFYGQAKASAEDIVKLSEVLGIDRFYLESLLSGFPDRGKSVTFPPKDPLIYRLFEIVQNYGYAYKAVMNEKFGDGIMSAISFSTTVEKETDLDGNNWAVVTWRGKWLPYSRF</sequence>
<name>CYNS_PARBA</name>
<comment type="function">
    <text evidence="1">Catalyzes the reaction of cyanate with bicarbonate to produce ammonia and carbon dioxide.</text>
</comment>
<comment type="catalytic activity">
    <reaction evidence="1">
        <text>cyanate + hydrogencarbonate + 3 H(+) = NH4(+) + 2 CO2</text>
        <dbReference type="Rhea" id="RHEA:11120"/>
        <dbReference type="ChEBI" id="CHEBI:15378"/>
        <dbReference type="ChEBI" id="CHEBI:16526"/>
        <dbReference type="ChEBI" id="CHEBI:17544"/>
        <dbReference type="ChEBI" id="CHEBI:28938"/>
        <dbReference type="ChEBI" id="CHEBI:29195"/>
        <dbReference type="EC" id="4.2.1.104"/>
    </reaction>
</comment>
<comment type="similarity">
    <text evidence="1">Belongs to the cyanase family.</text>
</comment>
<feature type="chain" id="PRO_0000403258" description="Cyanate hydratase">
    <location>
        <begin position="1"/>
        <end position="163"/>
    </location>
</feature>
<feature type="active site" evidence="1">
    <location>
        <position position="103"/>
    </location>
</feature>
<feature type="active site" evidence="1">
    <location>
        <position position="106"/>
    </location>
</feature>
<feature type="active site" evidence="1">
    <location>
        <position position="129"/>
    </location>
</feature>
<keyword id="KW-0456">Lyase</keyword>
<keyword id="KW-1185">Reference proteome</keyword>
<organism>
    <name type="scientific">Paracoccidioides lutzii (strain ATCC MYA-826 / Pb01)</name>
    <name type="common">Paracoccidioides brasiliensis</name>
    <dbReference type="NCBI Taxonomy" id="502779"/>
    <lineage>
        <taxon>Eukaryota</taxon>
        <taxon>Fungi</taxon>
        <taxon>Dikarya</taxon>
        <taxon>Ascomycota</taxon>
        <taxon>Pezizomycotina</taxon>
        <taxon>Eurotiomycetes</taxon>
        <taxon>Eurotiomycetidae</taxon>
        <taxon>Onygenales</taxon>
        <taxon>Ajellomycetaceae</taxon>
        <taxon>Paracoccidioides</taxon>
    </lineage>
</organism>
<evidence type="ECO:0000255" key="1">
    <source>
        <dbReference type="HAMAP-Rule" id="MF_03139"/>
    </source>
</evidence>
<gene>
    <name evidence="1" type="primary">CYN1</name>
    <name type="ORF">PAAG_06606</name>
</gene>
<dbReference type="EC" id="4.2.1.104" evidence="1"/>
<dbReference type="EMBL" id="KN294010">
    <property type="protein sequence ID" value="EEH35559.1"/>
    <property type="molecule type" value="Genomic_DNA"/>
</dbReference>
<dbReference type="RefSeq" id="XP_002791436.1">
    <property type="nucleotide sequence ID" value="XM_002791390.2"/>
</dbReference>
<dbReference type="SMR" id="C1H765"/>
<dbReference type="STRING" id="502779.C1H765"/>
<dbReference type="GeneID" id="9094775"/>
<dbReference type="KEGG" id="pbl:PAAG_06606"/>
<dbReference type="VEuPathDB" id="FungiDB:PAAG_06606"/>
<dbReference type="eggNOG" id="ENOG502S3YJ">
    <property type="taxonomic scope" value="Eukaryota"/>
</dbReference>
<dbReference type="HOGENOM" id="CLU_103452_0_0_1"/>
<dbReference type="OMA" id="YELVMIN"/>
<dbReference type="OrthoDB" id="10019422at2759"/>
<dbReference type="Proteomes" id="UP000002059">
    <property type="component" value="Partially assembled WGS sequence"/>
</dbReference>
<dbReference type="GO" id="GO:0008824">
    <property type="term" value="F:cyanate hydratase activity"/>
    <property type="evidence" value="ECO:0007669"/>
    <property type="project" value="UniProtKB-UniRule"/>
</dbReference>
<dbReference type="GO" id="GO:0003677">
    <property type="term" value="F:DNA binding"/>
    <property type="evidence" value="ECO:0007669"/>
    <property type="project" value="InterPro"/>
</dbReference>
<dbReference type="GO" id="GO:0009439">
    <property type="term" value="P:cyanate metabolic process"/>
    <property type="evidence" value="ECO:0007669"/>
    <property type="project" value="UniProtKB-UniRule"/>
</dbReference>
<dbReference type="CDD" id="cd00559">
    <property type="entry name" value="Cyanase_C"/>
    <property type="match status" value="1"/>
</dbReference>
<dbReference type="Gene3D" id="3.30.1160.10">
    <property type="entry name" value="Cyanate lyase, C-terminal domain"/>
    <property type="match status" value="1"/>
</dbReference>
<dbReference type="Gene3D" id="1.10.260.40">
    <property type="entry name" value="lambda repressor-like DNA-binding domains"/>
    <property type="match status" value="1"/>
</dbReference>
<dbReference type="HAMAP" id="MF_00535">
    <property type="entry name" value="Cyanate_hydrat"/>
    <property type="match status" value="1"/>
</dbReference>
<dbReference type="InterPro" id="IPR008076">
    <property type="entry name" value="Cyanase"/>
</dbReference>
<dbReference type="InterPro" id="IPR003712">
    <property type="entry name" value="Cyanate_lyase_C"/>
</dbReference>
<dbReference type="InterPro" id="IPR036581">
    <property type="entry name" value="Cyanate_lyase_C_sf"/>
</dbReference>
<dbReference type="InterPro" id="IPR010982">
    <property type="entry name" value="Lambda_DNA-bd_dom_sf"/>
</dbReference>
<dbReference type="NCBIfam" id="TIGR00673">
    <property type="entry name" value="cynS"/>
    <property type="match status" value="1"/>
</dbReference>
<dbReference type="PANTHER" id="PTHR34186">
    <property type="entry name" value="CYANATE HYDRATASE"/>
    <property type="match status" value="1"/>
</dbReference>
<dbReference type="PANTHER" id="PTHR34186:SF2">
    <property type="entry name" value="CYANATE HYDRATASE"/>
    <property type="match status" value="1"/>
</dbReference>
<dbReference type="Pfam" id="PF02560">
    <property type="entry name" value="Cyanate_lyase"/>
    <property type="match status" value="1"/>
</dbReference>
<dbReference type="PIRSF" id="PIRSF001263">
    <property type="entry name" value="Cyanate_hydratas"/>
    <property type="match status" value="1"/>
</dbReference>
<dbReference type="PRINTS" id="PR01693">
    <property type="entry name" value="CYANASE"/>
</dbReference>
<dbReference type="SMART" id="SM01116">
    <property type="entry name" value="Cyanate_lyase"/>
    <property type="match status" value="1"/>
</dbReference>
<dbReference type="SUPFAM" id="SSF55234">
    <property type="entry name" value="Cyanase C-terminal domain"/>
    <property type="match status" value="1"/>
</dbReference>
<dbReference type="SUPFAM" id="SSF47413">
    <property type="entry name" value="lambda repressor-like DNA-binding domains"/>
    <property type="match status" value="1"/>
</dbReference>
<accession>C1H765</accession>
<reference key="1">
    <citation type="journal article" date="2011" name="PLoS Genet.">
        <title>Comparative genomic analysis of human fungal pathogens causing paracoccidioidomycosis.</title>
        <authorList>
            <person name="Desjardins C.A."/>
            <person name="Champion M.D."/>
            <person name="Holder J.W."/>
            <person name="Muszewska A."/>
            <person name="Goldberg J."/>
            <person name="Bailao A.M."/>
            <person name="Brigido M.M."/>
            <person name="Ferreira M.E."/>
            <person name="Garcia A.M."/>
            <person name="Grynberg M."/>
            <person name="Gujja S."/>
            <person name="Heiman D.I."/>
            <person name="Henn M.R."/>
            <person name="Kodira C.D."/>
            <person name="Leon-Narvaez H."/>
            <person name="Longo L.V.G."/>
            <person name="Ma L.-J."/>
            <person name="Malavazi I."/>
            <person name="Matsuo A.L."/>
            <person name="Morais F.V."/>
            <person name="Pereira M."/>
            <person name="Rodriguez-Brito S."/>
            <person name="Sakthikumar S."/>
            <person name="Salem-Izacc S.M."/>
            <person name="Sykes S.M."/>
            <person name="Teixeira M.M."/>
            <person name="Vallejo M.C."/>
            <person name="Walter M.E."/>
            <person name="Yandava C."/>
            <person name="Young S."/>
            <person name="Zeng Q."/>
            <person name="Zucker J."/>
            <person name="Felipe M.S."/>
            <person name="Goldman G.H."/>
            <person name="Haas B.J."/>
            <person name="McEwen J.G."/>
            <person name="Nino-Vega G."/>
            <person name="Puccia R."/>
            <person name="San-Blas G."/>
            <person name="Soares C.M."/>
            <person name="Birren B.W."/>
            <person name="Cuomo C.A."/>
        </authorList>
    </citation>
    <scope>NUCLEOTIDE SEQUENCE [LARGE SCALE GENOMIC DNA]</scope>
    <source>
        <strain>ATCC MYA-826 / Pb01</strain>
    </source>
</reference>
<protein>
    <recommendedName>
        <fullName evidence="1">Cyanate hydratase</fullName>
        <shortName evidence="1">Cyanase</shortName>
        <ecNumber evidence="1">4.2.1.104</ecNumber>
    </recommendedName>
    <alternativeName>
        <fullName evidence="1">Cyanate hydrolase</fullName>
    </alternativeName>
    <alternativeName>
        <fullName evidence="1">Cyanate lyase</fullName>
    </alternativeName>
</protein>